<accession>A5IMJ4</accession>
<evidence type="ECO:0000255" key="1">
    <source>
        <dbReference type="HAMAP-Rule" id="MF_00176"/>
    </source>
</evidence>
<proteinExistence type="inferred from homology"/>
<comment type="function">
    <text evidence="1">Catalyzes the attachment of serine to tRNA(Ser). Is also able to aminoacylate tRNA(Sec) with serine, to form the misacylated tRNA L-seryl-tRNA(Sec), which will be further converted into selenocysteinyl-tRNA(Sec).</text>
</comment>
<comment type="catalytic activity">
    <reaction evidence="1">
        <text>tRNA(Ser) + L-serine + ATP = L-seryl-tRNA(Ser) + AMP + diphosphate + H(+)</text>
        <dbReference type="Rhea" id="RHEA:12292"/>
        <dbReference type="Rhea" id="RHEA-COMP:9669"/>
        <dbReference type="Rhea" id="RHEA-COMP:9703"/>
        <dbReference type="ChEBI" id="CHEBI:15378"/>
        <dbReference type="ChEBI" id="CHEBI:30616"/>
        <dbReference type="ChEBI" id="CHEBI:33019"/>
        <dbReference type="ChEBI" id="CHEBI:33384"/>
        <dbReference type="ChEBI" id="CHEBI:78442"/>
        <dbReference type="ChEBI" id="CHEBI:78533"/>
        <dbReference type="ChEBI" id="CHEBI:456215"/>
        <dbReference type="EC" id="6.1.1.11"/>
    </reaction>
</comment>
<comment type="catalytic activity">
    <reaction evidence="1">
        <text>tRNA(Sec) + L-serine + ATP = L-seryl-tRNA(Sec) + AMP + diphosphate + H(+)</text>
        <dbReference type="Rhea" id="RHEA:42580"/>
        <dbReference type="Rhea" id="RHEA-COMP:9742"/>
        <dbReference type="Rhea" id="RHEA-COMP:10128"/>
        <dbReference type="ChEBI" id="CHEBI:15378"/>
        <dbReference type="ChEBI" id="CHEBI:30616"/>
        <dbReference type="ChEBI" id="CHEBI:33019"/>
        <dbReference type="ChEBI" id="CHEBI:33384"/>
        <dbReference type="ChEBI" id="CHEBI:78442"/>
        <dbReference type="ChEBI" id="CHEBI:78533"/>
        <dbReference type="ChEBI" id="CHEBI:456215"/>
        <dbReference type="EC" id="6.1.1.11"/>
    </reaction>
</comment>
<comment type="pathway">
    <text evidence="1">Aminoacyl-tRNA biosynthesis; selenocysteinyl-tRNA(Sec) biosynthesis; L-seryl-tRNA(Sec) from L-serine and tRNA(Sec): step 1/1.</text>
</comment>
<comment type="subunit">
    <text evidence="1">Homodimer. The tRNA molecule binds across the dimer.</text>
</comment>
<comment type="subcellular location">
    <subcellularLocation>
        <location evidence="1">Cytoplasm</location>
    </subcellularLocation>
</comment>
<comment type="domain">
    <text evidence="1">Consists of two distinct domains, a catalytic core and a N-terminal extension that is involved in tRNA binding.</text>
</comment>
<comment type="similarity">
    <text evidence="1">Belongs to the class-II aminoacyl-tRNA synthetase family. Type-1 seryl-tRNA synthetase subfamily.</text>
</comment>
<name>SYS_THEP1</name>
<keyword id="KW-0030">Aminoacyl-tRNA synthetase</keyword>
<keyword id="KW-0067">ATP-binding</keyword>
<keyword id="KW-0963">Cytoplasm</keyword>
<keyword id="KW-0436">Ligase</keyword>
<keyword id="KW-0547">Nucleotide-binding</keyword>
<keyword id="KW-0648">Protein biosynthesis</keyword>
<reference key="1">
    <citation type="submission" date="2007-05" db="EMBL/GenBank/DDBJ databases">
        <title>Complete sequence of Thermotoga petrophila RKU-1.</title>
        <authorList>
            <consortium name="US DOE Joint Genome Institute"/>
            <person name="Copeland A."/>
            <person name="Lucas S."/>
            <person name="Lapidus A."/>
            <person name="Barry K."/>
            <person name="Glavina del Rio T."/>
            <person name="Dalin E."/>
            <person name="Tice H."/>
            <person name="Pitluck S."/>
            <person name="Sims D."/>
            <person name="Brettin T."/>
            <person name="Bruce D."/>
            <person name="Detter J.C."/>
            <person name="Han C."/>
            <person name="Tapia R."/>
            <person name="Schmutz J."/>
            <person name="Larimer F."/>
            <person name="Land M."/>
            <person name="Hauser L."/>
            <person name="Kyrpides N."/>
            <person name="Mikhailova N."/>
            <person name="Nelson K."/>
            <person name="Gogarten J.P."/>
            <person name="Noll K."/>
            <person name="Richardson P."/>
        </authorList>
    </citation>
    <scope>NUCLEOTIDE SEQUENCE [LARGE SCALE GENOMIC DNA]</scope>
    <source>
        <strain>ATCC BAA-488 / DSM 13995 / JCM 10881 / RKU-1</strain>
    </source>
</reference>
<organism>
    <name type="scientific">Thermotoga petrophila (strain ATCC BAA-488 / DSM 13995 / JCM 10881 / RKU-1)</name>
    <dbReference type="NCBI Taxonomy" id="390874"/>
    <lineage>
        <taxon>Bacteria</taxon>
        <taxon>Thermotogati</taxon>
        <taxon>Thermotogota</taxon>
        <taxon>Thermotogae</taxon>
        <taxon>Thermotogales</taxon>
        <taxon>Thermotogaceae</taxon>
        <taxon>Thermotoga</taxon>
    </lineage>
</organism>
<gene>
    <name evidence="1" type="primary">serS</name>
    <name type="ordered locus">Tpet_1404</name>
</gene>
<sequence>MIDIKLIRQNPDLVKEALRKRGEDPATIDEILKIDADWRTTITKTNELRSRRNEISKNVARLKKEGKNTEAEALIEEGKRLGEEIKALEEKEKELQKQLNDLLLMVPNIPHESVPVGEDESQNVEVRRWGEPREFDFTPLAHWDLGPAWGLMDFDRATKLSGSRFTVMYGKLARLERALINFMLDVHTKEHGYTEVWVPHLVKRETITITGQLPKFEEELYLAERDDLFLIPTAEVPLAALHSGEILEEKELPKKYVAYTPCYRREAGSYGKDVRGMIRQHQFDKVELVWVTTPERSFEDLEQLVKDAETILQKLELPYRVVSLCTGDLGFTSAKTYDIEVWLPSYNAYKEISSCSNVTDFQARRGNMRYRRRSDGKLEYVHTLNGSGIAVGRALVAILENYQQPDGSVRVPEVLVPYTGFEVIP</sequence>
<protein>
    <recommendedName>
        <fullName evidence="1">Serine--tRNA ligase</fullName>
        <ecNumber evidence="1">6.1.1.11</ecNumber>
    </recommendedName>
    <alternativeName>
        <fullName evidence="1">Seryl-tRNA synthetase</fullName>
        <shortName evidence="1">SerRS</shortName>
    </alternativeName>
    <alternativeName>
        <fullName evidence="1">Seryl-tRNA(Ser/Sec) synthetase</fullName>
    </alternativeName>
</protein>
<dbReference type="EC" id="6.1.1.11" evidence="1"/>
<dbReference type="EMBL" id="CP000702">
    <property type="protein sequence ID" value="ABQ47417.1"/>
    <property type="molecule type" value="Genomic_DNA"/>
</dbReference>
<dbReference type="RefSeq" id="WP_011943874.1">
    <property type="nucleotide sequence ID" value="NC_009486.1"/>
</dbReference>
<dbReference type="SMR" id="A5IMJ4"/>
<dbReference type="STRING" id="390874.Tpet_1404"/>
<dbReference type="KEGG" id="tpt:Tpet_1404"/>
<dbReference type="eggNOG" id="COG0172">
    <property type="taxonomic scope" value="Bacteria"/>
</dbReference>
<dbReference type="HOGENOM" id="CLU_023797_1_1_0"/>
<dbReference type="UniPathway" id="UPA00906">
    <property type="reaction ID" value="UER00895"/>
</dbReference>
<dbReference type="Proteomes" id="UP000006558">
    <property type="component" value="Chromosome"/>
</dbReference>
<dbReference type="GO" id="GO:0005737">
    <property type="term" value="C:cytoplasm"/>
    <property type="evidence" value="ECO:0007669"/>
    <property type="project" value="UniProtKB-SubCell"/>
</dbReference>
<dbReference type="GO" id="GO:0005524">
    <property type="term" value="F:ATP binding"/>
    <property type="evidence" value="ECO:0007669"/>
    <property type="project" value="UniProtKB-UniRule"/>
</dbReference>
<dbReference type="GO" id="GO:0004828">
    <property type="term" value="F:serine-tRNA ligase activity"/>
    <property type="evidence" value="ECO:0007669"/>
    <property type="project" value="UniProtKB-UniRule"/>
</dbReference>
<dbReference type="GO" id="GO:0016260">
    <property type="term" value="P:selenocysteine biosynthetic process"/>
    <property type="evidence" value="ECO:0007669"/>
    <property type="project" value="UniProtKB-UniRule"/>
</dbReference>
<dbReference type="GO" id="GO:0006434">
    <property type="term" value="P:seryl-tRNA aminoacylation"/>
    <property type="evidence" value="ECO:0007669"/>
    <property type="project" value="UniProtKB-UniRule"/>
</dbReference>
<dbReference type="CDD" id="cd00770">
    <property type="entry name" value="SerRS_core"/>
    <property type="match status" value="1"/>
</dbReference>
<dbReference type="Gene3D" id="3.30.930.10">
    <property type="entry name" value="Bira Bifunctional Protein, Domain 2"/>
    <property type="match status" value="1"/>
</dbReference>
<dbReference type="Gene3D" id="1.10.287.40">
    <property type="entry name" value="Serine-tRNA synthetase, tRNA binding domain"/>
    <property type="match status" value="1"/>
</dbReference>
<dbReference type="HAMAP" id="MF_00176">
    <property type="entry name" value="Ser_tRNA_synth_type1"/>
    <property type="match status" value="1"/>
</dbReference>
<dbReference type="InterPro" id="IPR002314">
    <property type="entry name" value="aa-tRNA-synt_IIb"/>
</dbReference>
<dbReference type="InterPro" id="IPR006195">
    <property type="entry name" value="aa-tRNA-synth_II"/>
</dbReference>
<dbReference type="InterPro" id="IPR045864">
    <property type="entry name" value="aa-tRNA-synth_II/BPL/LPL"/>
</dbReference>
<dbReference type="InterPro" id="IPR002317">
    <property type="entry name" value="Ser-tRNA-ligase_type_1"/>
</dbReference>
<dbReference type="InterPro" id="IPR015866">
    <property type="entry name" value="Ser-tRNA-synth_1_N"/>
</dbReference>
<dbReference type="InterPro" id="IPR042103">
    <property type="entry name" value="SerRS_1_N_sf"/>
</dbReference>
<dbReference type="InterPro" id="IPR033729">
    <property type="entry name" value="SerRS_core"/>
</dbReference>
<dbReference type="InterPro" id="IPR010978">
    <property type="entry name" value="tRNA-bd_arm"/>
</dbReference>
<dbReference type="NCBIfam" id="TIGR00414">
    <property type="entry name" value="serS"/>
    <property type="match status" value="1"/>
</dbReference>
<dbReference type="PANTHER" id="PTHR43697:SF1">
    <property type="entry name" value="SERINE--TRNA LIGASE"/>
    <property type="match status" value="1"/>
</dbReference>
<dbReference type="PANTHER" id="PTHR43697">
    <property type="entry name" value="SERYL-TRNA SYNTHETASE"/>
    <property type="match status" value="1"/>
</dbReference>
<dbReference type="Pfam" id="PF02403">
    <property type="entry name" value="Seryl_tRNA_N"/>
    <property type="match status" value="1"/>
</dbReference>
<dbReference type="Pfam" id="PF00587">
    <property type="entry name" value="tRNA-synt_2b"/>
    <property type="match status" value="1"/>
</dbReference>
<dbReference type="PIRSF" id="PIRSF001529">
    <property type="entry name" value="Ser-tRNA-synth_IIa"/>
    <property type="match status" value="1"/>
</dbReference>
<dbReference type="PRINTS" id="PR00981">
    <property type="entry name" value="TRNASYNTHSER"/>
</dbReference>
<dbReference type="SUPFAM" id="SSF55681">
    <property type="entry name" value="Class II aaRS and biotin synthetases"/>
    <property type="match status" value="1"/>
</dbReference>
<dbReference type="SUPFAM" id="SSF46589">
    <property type="entry name" value="tRNA-binding arm"/>
    <property type="match status" value="1"/>
</dbReference>
<dbReference type="PROSITE" id="PS50862">
    <property type="entry name" value="AA_TRNA_LIGASE_II"/>
    <property type="match status" value="1"/>
</dbReference>
<feature type="chain" id="PRO_1000019857" description="Serine--tRNA ligase">
    <location>
        <begin position="1"/>
        <end position="425"/>
    </location>
</feature>
<feature type="binding site" evidence="1">
    <location>
        <begin position="233"/>
        <end position="235"/>
    </location>
    <ligand>
        <name>L-serine</name>
        <dbReference type="ChEBI" id="CHEBI:33384"/>
    </ligand>
</feature>
<feature type="binding site" evidence="1">
    <location>
        <begin position="264"/>
        <end position="266"/>
    </location>
    <ligand>
        <name>ATP</name>
        <dbReference type="ChEBI" id="CHEBI:30616"/>
    </ligand>
</feature>
<feature type="binding site" evidence="1">
    <location>
        <position position="287"/>
    </location>
    <ligand>
        <name>L-serine</name>
        <dbReference type="ChEBI" id="CHEBI:33384"/>
    </ligand>
</feature>
<feature type="binding site" evidence="1">
    <location>
        <begin position="351"/>
        <end position="354"/>
    </location>
    <ligand>
        <name>ATP</name>
        <dbReference type="ChEBI" id="CHEBI:30616"/>
    </ligand>
</feature>
<feature type="binding site" evidence="1">
    <location>
        <position position="387"/>
    </location>
    <ligand>
        <name>L-serine</name>
        <dbReference type="ChEBI" id="CHEBI:33384"/>
    </ligand>
</feature>